<comment type="function">
    <text evidence="1">Part of the twin-arginine translocation (Tat) system that transports large folded proteins containing a characteristic twin-arginine motif in their signal peptide across membranes. TatA could form the protein-conducting channel of the Tat system.</text>
</comment>
<comment type="subunit">
    <text evidence="1">The Tat system comprises two distinct complexes: a TatABC complex, containing multiple copies of TatA, TatB and TatC subunits, and a separate TatA complex, containing only TatA subunits. Substrates initially bind to the TatABC complex, which probably triggers association of the separate TatA complex to form the active translocon.</text>
</comment>
<comment type="subcellular location">
    <subcellularLocation>
        <location evidence="1">Cell inner membrane</location>
        <topology evidence="1">Single-pass membrane protein</topology>
    </subcellularLocation>
</comment>
<comment type="similarity">
    <text evidence="1">Belongs to the TatA/E family.</text>
</comment>
<organism>
    <name type="scientific">Acinetobacter baumannii (strain ATCC 17978 / DSM 105126 / CIP 53.77 / LMG 1025 / NCDC KC755 / 5377)</name>
    <dbReference type="NCBI Taxonomy" id="400667"/>
    <lineage>
        <taxon>Bacteria</taxon>
        <taxon>Pseudomonadati</taxon>
        <taxon>Pseudomonadota</taxon>
        <taxon>Gammaproteobacteria</taxon>
        <taxon>Moraxellales</taxon>
        <taxon>Moraxellaceae</taxon>
        <taxon>Acinetobacter</taxon>
        <taxon>Acinetobacter calcoaceticus/baumannii complex</taxon>
    </lineage>
</organism>
<reference key="1">
    <citation type="journal article" date="2007" name="Genes Dev.">
        <title>New insights into Acinetobacter baumannii pathogenesis revealed by high-density pyrosequencing and transposon mutagenesis.</title>
        <authorList>
            <person name="Smith M.G."/>
            <person name="Gianoulis T.A."/>
            <person name="Pukatzki S."/>
            <person name="Mekalanos J.J."/>
            <person name="Ornston L.N."/>
            <person name="Gerstein M."/>
            <person name="Snyder M."/>
        </authorList>
    </citation>
    <scope>NUCLEOTIDE SEQUENCE [LARGE SCALE GENOMIC DNA]</scope>
    <source>
        <strain>ATCC 17978 / DSM 105126 / CIP 53.77 / LMG 1025 / NCDC KC755 / 5377</strain>
    </source>
</reference>
<evidence type="ECO:0000255" key="1">
    <source>
        <dbReference type="HAMAP-Rule" id="MF_00236"/>
    </source>
</evidence>
<evidence type="ECO:0000256" key="2">
    <source>
        <dbReference type="SAM" id="MobiDB-lite"/>
    </source>
</evidence>
<protein>
    <recommendedName>
        <fullName evidence="1">Sec-independent protein translocase protein TatA</fullName>
    </recommendedName>
</protein>
<proteinExistence type="inferred from homology"/>
<sequence length="72" mass="7747">MAGLSIWHVVIFAIVVILLFGTSKLKNIGKDVGGAVRDFKKSVREEDEAASLNSPRTIDAQVKTSESTSVKS</sequence>
<keyword id="KW-0997">Cell inner membrane</keyword>
<keyword id="KW-1003">Cell membrane</keyword>
<keyword id="KW-0472">Membrane</keyword>
<keyword id="KW-0653">Protein transport</keyword>
<keyword id="KW-0811">Translocation</keyword>
<keyword id="KW-0812">Transmembrane</keyword>
<keyword id="KW-1133">Transmembrane helix</keyword>
<keyword id="KW-0813">Transport</keyword>
<name>TATA_ACIBT</name>
<accession>A3M1X7</accession>
<dbReference type="EMBL" id="CP000521">
    <property type="protein sequence ID" value="ABO10921.1"/>
    <property type="molecule type" value="Genomic_DNA"/>
</dbReference>
<dbReference type="RefSeq" id="WP_000908081.1">
    <property type="nucleotide sequence ID" value="NZ_CP053098.1"/>
</dbReference>
<dbReference type="SMR" id="A3M1X7"/>
<dbReference type="KEGG" id="acb:A1S_0466"/>
<dbReference type="HOGENOM" id="CLU_086034_5_3_6"/>
<dbReference type="GO" id="GO:0033281">
    <property type="term" value="C:TAT protein transport complex"/>
    <property type="evidence" value="ECO:0007669"/>
    <property type="project" value="UniProtKB-UniRule"/>
</dbReference>
<dbReference type="GO" id="GO:0008320">
    <property type="term" value="F:protein transmembrane transporter activity"/>
    <property type="evidence" value="ECO:0007669"/>
    <property type="project" value="UniProtKB-UniRule"/>
</dbReference>
<dbReference type="GO" id="GO:0043953">
    <property type="term" value="P:protein transport by the Tat complex"/>
    <property type="evidence" value="ECO:0007669"/>
    <property type="project" value="UniProtKB-UniRule"/>
</dbReference>
<dbReference type="Gene3D" id="1.20.5.3310">
    <property type="match status" value="1"/>
</dbReference>
<dbReference type="HAMAP" id="MF_00236">
    <property type="entry name" value="TatA_E"/>
    <property type="match status" value="1"/>
</dbReference>
<dbReference type="InterPro" id="IPR003369">
    <property type="entry name" value="TatA/B/E"/>
</dbReference>
<dbReference type="InterPro" id="IPR006312">
    <property type="entry name" value="TatA/E"/>
</dbReference>
<dbReference type="NCBIfam" id="TIGR01411">
    <property type="entry name" value="tatAE"/>
    <property type="match status" value="1"/>
</dbReference>
<dbReference type="PANTHER" id="PTHR42982">
    <property type="entry name" value="SEC-INDEPENDENT PROTEIN TRANSLOCASE PROTEIN TATA"/>
    <property type="match status" value="1"/>
</dbReference>
<dbReference type="PANTHER" id="PTHR42982:SF1">
    <property type="entry name" value="SEC-INDEPENDENT PROTEIN TRANSLOCASE PROTEIN TATA"/>
    <property type="match status" value="1"/>
</dbReference>
<dbReference type="Pfam" id="PF02416">
    <property type="entry name" value="TatA_B_E"/>
    <property type="match status" value="1"/>
</dbReference>
<feature type="chain" id="PRO_1000044347" description="Sec-independent protein translocase protein TatA">
    <location>
        <begin position="1"/>
        <end position="72"/>
    </location>
</feature>
<feature type="transmembrane region" description="Helical" evidence="1">
    <location>
        <begin position="1"/>
        <end position="21"/>
    </location>
</feature>
<feature type="region of interest" description="Disordered" evidence="2">
    <location>
        <begin position="47"/>
        <end position="72"/>
    </location>
</feature>
<feature type="compositionally biased region" description="Polar residues" evidence="2">
    <location>
        <begin position="51"/>
        <end position="72"/>
    </location>
</feature>
<gene>
    <name evidence="1" type="primary">tatA</name>
    <name type="ordered locus">A1S_0466</name>
</gene>